<evidence type="ECO:0000255" key="1">
    <source>
        <dbReference type="HAMAP-Rule" id="MF_00022"/>
    </source>
</evidence>
<accession>Q1IVB1</accession>
<proteinExistence type="inferred from homology"/>
<comment type="function">
    <text evidence="1">Catalyzes the attachment of glutamate to tRNA(Glu) in a two-step reaction: glutamate is first activated by ATP to form Glu-AMP and then transferred to the acceptor end of tRNA(Glu).</text>
</comment>
<comment type="catalytic activity">
    <reaction evidence="1">
        <text>tRNA(Glu) + L-glutamate + ATP = L-glutamyl-tRNA(Glu) + AMP + diphosphate</text>
        <dbReference type="Rhea" id="RHEA:23540"/>
        <dbReference type="Rhea" id="RHEA-COMP:9663"/>
        <dbReference type="Rhea" id="RHEA-COMP:9680"/>
        <dbReference type="ChEBI" id="CHEBI:29985"/>
        <dbReference type="ChEBI" id="CHEBI:30616"/>
        <dbReference type="ChEBI" id="CHEBI:33019"/>
        <dbReference type="ChEBI" id="CHEBI:78442"/>
        <dbReference type="ChEBI" id="CHEBI:78520"/>
        <dbReference type="ChEBI" id="CHEBI:456215"/>
        <dbReference type="EC" id="6.1.1.17"/>
    </reaction>
</comment>
<comment type="subunit">
    <text evidence="1">Monomer.</text>
</comment>
<comment type="subcellular location">
    <subcellularLocation>
        <location evidence="1">Cytoplasm</location>
    </subcellularLocation>
</comment>
<comment type="similarity">
    <text evidence="1">Belongs to the class-I aminoacyl-tRNA synthetase family. Glutamate--tRNA ligase type 1 subfamily.</text>
</comment>
<reference key="1">
    <citation type="journal article" date="2009" name="Appl. Environ. Microbiol.">
        <title>Three genomes from the phylum Acidobacteria provide insight into the lifestyles of these microorganisms in soils.</title>
        <authorList>
            <person name="Ward N.L."/>
            <person name="Challacombe J.F."/>
            <person name="Janssen P.H."/>
            <person name="Henrissat B."/>
            <person name="Coutinho P.M."/>
            <person name="Wu M."/>
            <person name="Xie G."/>
            <person name="Haft D.H."/>
            <person name="Sait M."/>
            <person name="Badger J."/>
            <person name="Barabote R.D."/>
            <person name="Bradley B."/>
            <person name="Brettin T.S."/>
            <person name="Brinkac L.M."/>
            <person name="Bruce D."/>
            <person name="Creasy T."/>
            <person name="Daugherty S.C."/>
            <person name="Davidsen T.M."/>
            <person name="DeBoy R.T."/>
            <person name="Detter J.C."/>
            <person name="Dodson R.J."/>
            <person name="Durkin A.S."/>
            <person name="Ganapathy A."/>
            <person name="Gwinn-Giglio M."/>
            <person name="Han C.S."/>
            <person name="Khouri H."/>
            <person name="Kiss H."/>
            <person name="Kothari S.P."/>
            <person name="Madupu R."/>
            <person name="Nelson K.E."/>
            <person name="Nelson W.C."/>
            <person name="Paulsen I."/>
            <person name="Penn K."/>
            <person name="Ren Q."/>
            <person name="Rosovitz M.J."/>
            <person name="Selengut J.D."/>
            <person name="Shrivastava S."/>
            <person name="Sullivan S.A."/>
            <person name="Tapia R."/>
            <person name="Thompson L.S."/>
            <person name="Watkins K.L."/>
            <person name="Yang Q."/>
            <person name="Yu C."/>
            <person name="Zafar N."/>
            <person name="Zhou L."/>
            <person name="Kuske C.R."/>
        </authorList>
    </citation>
    <scope>NUCLEOTIDE SEQUENCE [LARGE SCALE GENOMIC DNA]</scope>
    <source>
        <strain>Ellin345</strain>
    </source>
</reference>
<protein>
    <recommendedName>
        <fullName evidence="1">Glutamate--tRNA ligase 2</fullName>
        <ecNumber evidence="1">6.1.1.17</ecNumber>
    </recommendedName>
    <alternativeName>
        <fullName evidence="1">Glutamyl-tRNA synthetase 2</fullName>
        <shortName evidence="1">GluRS 2</shortName>
    </alternativeName>
</protein>
<gene>
    <name evidence="1" type="primary">gltX2</name>
    <name type="ordered locus">Acid345_0184</name>
</gene>
<sequence length="480" mass="53083">MSSQVSSPVRVRFAPSPTGYLHVGGARTALFNWLYARHVGGTLVLRIEDTDLERSTPEMVEGILVGMRWLGLNWDEGPYYQTQRMDLYKAAAEKLVASGHAYYCFCSKEGLEQRRKAATAAGRAPQYDESCRKIGREDAAARKQGGAPCAVRFAVPETGNTKFQDAVFGEVEFANPELEDFVLLRSDGVPTYHLSVVVDDVDMKISHILRGADHISNTPKQVLLYQAMGATLPIFAHVPLILGPDKTRLSKRHGATSVISYSDEGIVPEAFRNFLALLGWTAPEGSPEKLGDEELIKLFSLEGISHSNAVFDRPKLDWFNTEYIRAYPAEKLLPLIQKEWQKVGLTPANPDAQHLVATIELLKPRARNLKDFAGSFKAFFTDDYANDPEAVEKFLKDPAVREMLVELGERYANAGEFTEQSTEQVLRDLAAEKGVKAGGLINGARVALTGQAVAPSLFAVMVNLGREKTVSRLRRAKEIQ</sequence>
<keyword id="KW-0030">Aminoacyl-tRNA synthetase</keyword>
<keyword id="KW-0067">ATP-binding</keyword>
<keyword id="KW-0963">Cytoplasm</keyword>
<keyword id="KW-0436">Ligase</keyword>
<keyword id="KW-0547">Nucleotide-binding</keyword>
<keyword id="KW-0648">Protein biosynthesis</keyword>
<keyword id="KW-1185">Reference proteome</keyword>
<dbReference type="EC" id="6.1.1.17" evidence="1"/>
<dbReference type="EMBL" id="CP000360">
    <property type="protein sequence ID" value="ABF39189.1"/>
    <property type="molecule type" value="Genomic_DNA"/>
</dbReference>
<dbReference type="RefSeq" id="WP_011520991.1">
    <property type="nucleotide sequence ID" value="NC_008009.1"/>
</dbReference>
<dbReference type="SMR" id="Q1IVB1"/>
<dbReference type="STRING" id="204669.Acid345_0184"/>
<dbReference type="EnsemblBacteria" id="ABF39189">
    <property type="protein sequence ID" value="ABF39189"/>
    <property type="gene ID" value="Acid345_0184"/>
</dbReference>
<dbReference type="KEGG" id="aba:Acid345_0184"/>
<dbReference type="eggNOG" id="COG0008">
    <property type="taxonomic scope" value="Bacteria"/>
</dbReference>
<dbReference type="HOGENOM" id="CLU_015768_6_3_0"/>
<dbReference type="OrthoDB" id="9807503at2"/>
<dbReference type="Proteomes" id="UP000002432">
    <property type="component" value="Chromosome"/>
</dbReference>
<dbReference type="GO" id="GO:0005829">
    <property type="term" value="C:cytosol"/>
    <property type="evidence" value="ECO:0007669"/>
    <property type="project" value="TreeGrafter"/>
</dbReference>
<dbReference type="GO" id="GO:0005524">
    <property type="term" value="F:ATP binding"/>
    <property type="evidence" value="ECO:0007669"/>
    <property type="project" value="UniProtKB-UniRule"/>
</dbReference>
<dbReference type="GO" id="GO:0004818">
    <property type="term" value="F:glutamate-tRNA ligase activity"/>
    <property type="evidence" value="ECO:0007669"/>
    <property type="project" value="UniProtKB-UniRule"/>
</dbReference>
<dbReference type="GO" id="GO:0000049">
    <property type="term" value="F:tRNA binding"/>
    <property type="evidence" value="ECO:0007669"/>
    <property type="project" value="InterPro"/>
</dbReference>
<dbReference type="GO" id="GO:0008270">
    <property type="term" value="F:zinc ion binding"/>
    <property type="evidence" value="ECO:0007669"/>
    <property type="project" value="InterPro"/>
</dbReference>
<dbReference type="GO" id="GO:0006424">
    <property type="term" value="P:glutamyl-tRNA aminoacylation"/>
    <property type="evidence" value="ECO:0007669"/>
    <property type="project" value="UniProtKB-UniRule"/>
</dbReference>
<dbReference type="CDD" id="cd00808">
    <property type="entry name" value="GluRS_core"/>
    <property type="match status" value="1"/>
</dbReference>
<dbReference type="FunFam" id="3.40.50.620:FF:000007">
    <property type="entry name" value="Glutamate--tRNA ligase"/>
    <property type="match status" value="1"/>
</dbReference>
<dbReference type="Gene3D" id="1.10.10.350">
    <property type="match status" value="1"/>
</dbReference>
<dbReference type="Gene3D" id="3.40.50.620">
    <property type="entry name" value="HUPs"/>
    <property type="match status" value="1"/>
</dbReference>
<dbReference type="HAMAP" id="MF_00022">
    <property type="entry name" value="Glu_tRNA_synth_type1"/>
    <property type="match status" value="1"/>
</dbReference>
<dbReference type="InterPro" id="IPR045462">
    <property type="entry name" value="aa-tRNA-synth_I_cd-bd"/>
</dbReference>
<dbReference type="InterPro" id="IPR020751">
    <property type="entry name" value="aa-tRNA-synth_I_codon-bd_sub2"/>
</dbReference>
<dbReference type="InterPro" id="IPR001412">
    <property type="entry name" value="aa-tRNA-synth_I_CS"/>
</dbReference>
<dbReference type="InterPro" id="IPR008925">
    <property type="entry name" value="aa_tRNA-synth_I_cd-bd_sf"/>
</dbReference>
<dbReference type="InterPro" id="IPR004527">
    <property type="entry name" value="Glu-tRNA-ligase_bac/mito"/>
</dbReference>
<dbReference type="InterPro" id="IPR000924">
    <property type="entry name" value="Glu/Gln-tRNA-synth"/>
</dbReference>
<dbReference type="InterPro" id="IPR020058">
    <property type="entry name" value="Glu/Gln-tRNA-synth_Ib_cat-dom"/>
</dbReference>
<dbReference type="InterPro" id="IPR049940">
    <property type="entry name" value="GluQ/Sye"/>
</dbReference>
<dbReference type="InterPro" id="IPR033910">
    <property type="entry name" value="GluRS_core"/>
</dbReference>
<dbReference type="InterPro" id="IPR014729">
    <property type="entry name" value="Rossmann-like_a/b/a_fold"/>
</dbReference>
<dbReference type="NCBIfam" id="TIGR00464">
    <property type="entry name" value="gltX_bact"/>
    <property type="match status" value="1"/>
</dbReference>
<dbReference type="PANTHER" id="PTHR43311">
    <property type="entry name" value="GLUTAMATE--TRNA LIGASE"/>
    <property type="match status" value="1"/>
</dbReference>
<dbReference type="PANTHER" id="PTHR43311:SF2">
    <property type="entry name" value="GLUTAMATE--TRNA LIGASE, MITOCHONDRIAL-RELATED"/>
    <property type="match status" value="1"/>
</dbReference>
<dbReference type="Pfam" id="PF19269">
    <property type="entry name" value="Anticodon_2"/>
    <property type="match status" value="1"/>
</dbReference>
<dbReference type="Pfam" id="PF00749">
    <property type="entry name" value="tRNA-synt_1c"/>
    <property type="match status" value="1"/>
</dbReference>
<dbReference type="PRINTS" id="PR00987">
    <property type="entry name" value="TRNASYNTHGLU"/>
</dbReference>
<dbReference type="SUPFAM" id="SSF48163">
    <property type="entry name" value="An anticodon-binding domain of class I aminoacyl-tRNA synthetases"/>
    <property type="match status" value="1"/>
</dbReference>
<dbReference type="SUPFAM" id="SSF52374">
    <property type="entry name" value="Nucleotidylyl transferase"/>
    <property type="match status" value="1"/>
</dbReference>
<dbReference type="PROSITE" id="PS00178">
    <property type="entry name" value="AA_TRNA_LIGASE_I"/>
    <property type="match status" value="1"/>
</dbReference>
<feature type="chain" id="PRO_0000367600" description="Glutamate--tRNA ligase 2">
    <location>
        <begin position="1"/>
        <end position="480"/>
    </location>
</feature>
<feature type="short sequence motif" description="'HIGH' region" evidence="1">
    <location>
        <begin position="15"/>
        <end position="25"/>
    </location>
</feature>
<feature type="short sequence motif" description="'KMSKS' region" evidence="1">
    <location>
        <begin position="248"/>
        <end position="252"/>
    </location>
</feature>
<feature type="binding site" evidence="1">
    <location>
        <position position="251"/>
    </location>
    <ligand>
        <name>ATP</name>
        <dbReference type="ChEBI" id="CHEBI:30616"/>
    </ligand>
</feature>
<organism>
    <name type="scientific">Koribacter versatilis (strain Ellin345)</name>
    <dbReference type="NCBI Taxonomy" id="204669"/>
    <lineage>
        <taxon>Bacteria</taxon>
        <taxon>Pseudomonadati</taxon>
        <taxon>Acidobacteriota</taxon>
        <taxon>Terriglobia</taxon>
        <taxon>Terriglobales</taxon>
        <taxon>Candidatus Korobacteraceae</taxon>
        <taxon>Candidatus Korobacter</taxon>
    </lineage>
</organism>
<name>SYE2_KORVE</name>